<accession>Q6FUJ0</accession>
<comment type="function">
    <text evidence="1 2">Acts as one of several non-catalytic accessory components of the cytoplasmic dynein complex that are thought to be involved in linking dynein to cargos and to adapter proteins that regulate dynein function. Cytoplasmic dynein 1 acts as a motor for the intracellular retrograde motility of vesicles and organelles along microtubules. May play a role in changing or maintaining the spatial distribution of cytoskeletal structures (By similarity). Also a component of the nuclear pore complex (By similarity).</text>
</comment>
<comment type="subunit">
    <text evidence="2">Homodimer. Cytoplasmic dynein consists of two catalytic heavy chains (HCs) and a number of non-catalytic subunits which present intermediate chains (ICs), light intermediate chains (LICs) and light chains (LCs). Component of the nuclear pore complex (NPC). NPC constitutes the exclusive means of nucleocytoplasmic transport. NPCs allow the passive diffusion of ions and small molecules and the active, nuclear transport receptor-mediated bidirectional transport of macromolecules such as proteins, RNAs, ribonucleoparticles (RNPs), and ribosomal subunits across the nuclear envelope. Due to its 8-fold rotational symmetry, all subunits are present with 8 copies or multiples thereof.</text>
</comment>
<comment type="subcellular location">
    <subcellularLocation>
        <location evidence="2">Cytoplasm</location>
        <location evidence="2">Cytoskeleton</location>
    </subcellularLocation>
    <subcellularLocation>
        <location evidence="2">Nucleus</location>
        <location evidence="2">Nuclear pore complex</location>
    </subcellularLocation>
</comment>
<comment type="similarity">
    <text evidence="3">Belongs to the dynein light chain family.</text>
</comment>
<sequence>MDQVIVKASDMGDEMQQEVFRIAEEAMREHTLEREIASVIKKEMDSRYGHTWHVIVGRSFGSYVTHEKGKFVYFYVGPLALLVFKT</sequence>
<protein>
    <recommendedName>
        <fullName>Dynein light chain 1, cytoplasmic</fullName>
    </recommendedName>
</protein>
<organism>
    <name type="scientific">Candida glabrata (strain ATCC 2001 / BCRC 20586 / JCM 3761 / NBRC 0622 / NRRL Y-65 / CBS 138)</name>
    <name type="common">Yeast</name>
    <name type="synonym">Nakaseomyces glabratus</name>
    <dbReference type="NCBI Taxonomy" id="284593"/>
    <lineage>
        <taxon>Eukaryota</taxon>
        <taxon>Fungi</taxon>
        <taxon>Dikarya</taxon>
        <taxon>Ascomycota</taxon>
        <taxon>Saccharomycotina</taxon>
        <taxon>Saccharomycetes</taxon>
        <taxon>Saccharomycetales</taxon>
        <taxon>Saccharomycetaceae</taxon>
        <taxon>Nakaseomyces</taxon>
    </lineage>
</organism>
<reference key="1">
    <citation type="journal article" date="2004" name="Nature">
        <title>Genome evolution in yeasts.</title>
        <authorList>
            <person name="Dujon B."/>
            <person name="Sherman D."/>
            <person name="Fischer G."/>
            <person name="Durrens P."/>
            <person name="Casaregola S."/>
            <person name="Lafontaine I."/>
            <person name="de Montigny J."/>
            <person name="Marck C."/>
            <person name="Neuveglise C."/>
            <person name="Talla E."/>
            <person name="Goffard N."/>
            <person name="Frangeul L."/>
            <person name="Aigle M."/>
            <person name="Anthouard V."/>
            <person name="Babour A."/>
            <person name="Barbe V."/>
            <person name="Barnay S."/>
            <person name="Blanchin S."/>
            <person name="Beckerich J.-M."/>
            <person name="Beyne E."/>
            <person name="Bleykasten C."/>
            <person name="Boisrame A."/>
            <person name="Boyer J."/>
            <person name="Cattolico L."/>
            <person name="Confanioleri F."/>
            <person name="de Daruvar A."/>
            <person name="Despons L."/>
            <person name="Fabre E."/>
            <person name="Fairhead C."/>
            <person name="Ferry-Dumazet H."/>
            <person name="Groppi A."/>
            <person name="Hantraye F."/>
            <person name="Hennequin C."/>
            <person name="Jauniaux N."/>
            <person name="Joyet P."/>
            <person name="Kachouri R."/>
            <person name="Kerrest A."/>
            <person name="Koszul R."/>
            <person name="Lemaire M."/>
            <person name="Lesur I."/>
            <person name="Ma L."/>
            <person name="Muller H."/>
            <person name="Nicaud J.-M."/>
            <person name="Nikolski M."/>
            <person name="Oztas S."/>
            <person name="Ozier-Kalogeropoulos O."/>
            <person name="Pellenz S."/>
            <person name="Potier S."/>
            <person name="Richard G.-F."/>
            <person name="Straub M.-L."/>
            <person name="Suleau A."/>
            <person name="Swennen D."/>
            <person name="Tekaia F."/>
            <person name="Wesolowski-Louvel M."/>
            <person name="Westhof E."/>
            <person name="Wirth B."/>
            <person name="Zeniou-Meyer M."/>
            <person name="Zivanovic Y."/>
            <person name="Bolotin-Fukuhara M."/>
            <person name="Thierry A."/>
            <person name="Bouchier C."/>
            <person name="Caudron B."/>
            <person name="Scarpelli C."/>
            <person name="Gaillardin C."/>
            <person name="Weissenbach J."/>
            <person name="Wincker P."/>
            <person name="Souciet J.-L."/>
        </authorList>
    </citation>
    <scope>NUCLEOTIDE SEQUENCE [LARGE SCALE GENOMIC DNA]</scope>
    <source>
        <strain>ATCC 2001 / BCRC 20586 / JCM 3761 / NBRC 0622 / NRRL Y-65 / CBS 138</strain>
    </source>
</reference>
<proteinExistence type="inferred from homology"/>
<gene>
    <name type="primary">DYN2</name>
    <name type="ordered locus">CAGL0F03091g</name>
</gene>
<evidence type="ECO:0000250" key="1"/>
<evidence type="ECO:0000250" key="2">
    <source>
        <dbReference type="UniProtKB" id="Q02647"/>
    </source>
</evidence>
<evidence type="ECO:0000305" key="3"/>
<dbReference type="EMBL" id="CR380952">
    <property type="protein sequence ID" value="CAG59028.1"/>
    <property type="molecule type" value="Genomic_DNA"/>
</dbReference>
<dbReference type="RefSeq" id="XP_446104.1">
    <property type="nucleotide sequence ID" value="XM_446104.1"/>
</dbReference>
<dbReference type="SMR" id="Q6FUJ0"/>
<dbReference type="FunCoup" id="Q6FUJ0">
    <property type="interactions" value="731"/>
</dbReference>
<dbReference type="STRING" id="284593.Q6FUJ0"/>
<dbReference type="EnsemblFungi" id="CAGL0F03091g-T">
    <property type="protein sequence ID" value="CAGL0F03091g-T-p1"/>
    <property type="gene ID" value="CAGL0F03091g"/>
</dbReference>
<dbReference type="KEGG" id="cgr:2887691"/>
<dbReference type="CGD" id="CAL0131254">
    <property type="gene designation" value="CAGL0F03091g"/>
</dbReference>
<dbReference type="VEuPathDB" id="FungiDB:B1J91_F03091g"/>
<dbReference type="VEuPathDB" id="FungiDB:CAGL0F03091g"/>
<dbReference type="eggNOG" id="KOG3430">
    <property type="taxonomic scope" value="Eukaryota"/>
</dbReference>
<dbReference type="HOGENOM" id="CLU_070944_4_1_1"/>
<dbReference type="InParanoid" id="Q6FUJ0"/>
<dbReference type="OMA" id="THEKGHF"/>
<dbReference type="Proteomes" id="UP000002428">
    <property type="component" value="Chromosome F"/>
</dbReference>
<dbReference type="GO" id="GO:0005868">
    <property type="term" value="C:cytoplasmic dynein complex"/>
    <property type="evidence" value="ECO:0007669"/>
    <property type="project" value="EnsemblFungi"/>
</dbReference>
<dbReference type="GO" id="GO:0005881">
    <property type="term" value="C:cytoplasmic microtubule"/>
    <property type="evidence" value="ECO:0007669"/>
    <property type="project" value="EnsemblFungi"/>
</dbReference>
<dbReference type="GO" id="GO:0035974">
    <property type="term" value="C:meiotic spindle pole body"/>
    <property type="evidence" value="ECO:0007669"/>
    <property type="project" value="EnsemblFungi"/>
</dbReference>
<dbReference type="GO" id="GO:0034399">
    <property type="term" value="C:nuclear periphery"/>
    <property type="evidence" value="ECO:0007669"/>
    <property type="project" value="EnsemblFungi"/>
</dbReference>
<dbReference type="GO" id="GO:0005643">
    <property type="term" value="C:nuclear pore"/>
    <property type="evidence" value="ECO:0007669"/>
    <property type="project" value="UniProtKB-SubCell"/>
</dbReference>
<dbReference type="GO" id="GO:1990429">
    <property type="term" value="C:peroxisomal importomer complex"/>
    <property type="evidence" value="ECO:0007669"/>
    <property type="project" value="EnsemblFungi"/>
</dbReference>
<dbReference type="GO" id="GO:0045505">
    <property type="term" value="F:dynein intermediate chain binding"/>
    <property type="evidence" value="ECO:0007669"/>
    <property type="project" value="TreeGrafter"/>
</dbReference>
<dbReference type="GO" id="GO:0008574">
    <property type="term" value="F:plus-end-directed microtubule motor activity"/>
    <property type="evidence" value="ECO:0007669"/>
    <property type="project" value="EnsemblFungi"/>
</dbReference>
<dbReference type="GO" id="GO:0040001">
    <property type="term" value="P:establishment of mitotic spindle localization"/>
    <property type="evidence" value="ECO:0007669"/>
    <property type="project" value="EnsemblFungi"/>
</dbReference>
<dbReference type="GO" id="GO:0051028">
    <property type="term" value="P:mRNA transport"/>
    <property type="evidence" value="ECO:0007669"/>
    <property type="project" value="UniProtKB-KW"/>
</dbReference>
<dbReference type="GO" id="GO:0030473">
    <property type="term" value="P:nuclear migration along microtubule"/>
    <property type="evidence" value="ECO:0007669"/>
    <property type="project" value="EnsemblFungi"/>
</dbReference>
<dbReference type="GO" id="GO:0051292">
    <property type="term" value="P:nuclear pore complex assembly"/>
    <property type="evidence" value="ECO:0007669"/>
    <property type="project" value="EnsemblFungi"/>
</dbReference>
<dbReference type="GO" id="GO:0015031">
    <property type="term" value="P:protein transport"/>
    <property type="evidence" value="ECO:0007669"/>
    <property type="project" value="UniProtKB-KW"/>
</dbReference>
<dbReference type="CDD" id="cd21452">
    <property type="entry name" value="DLC-like_DYNLL1_DYNLL2"/>
    <property type="match status" value="1"/>
</dbReference>
<dbReference type="FunFam" id="3.30.740.10:FF:000005">
    <property type="entry name" value="Dynein light chain"/>
    <property type="match status" value="1"/>
</dbReference>
<dbReference type="Gene3D" id="3.30.740.10">
    <property type="entry name" value="Protein Inhibitor Of Neuronal Nitric Oxide Synthase"/>
    <property type="match status" value="1"/>
</dbReference>
<dbReference type="InterPro" id="IPR037177">
    <property type="entry name" value="DLC_sf"/>
</dbReference>
<dbReference type="InterPro" id="IPR019763">
    <property type="entry name" value="Dynein_light_1/2_CS"/>
</dbReference>
<dbReference type="InterPro" id="IPR001372">
    <property type="entry name" value="Dynein_light_chain_typ-1/2"/>
</dbReference>
<dbReference type="PANTHER" id="PTHR11886">
    <property type="entry name" value="DYNEIN LIGHT CHAIN"/>
    <property type="match status" value="1"/>
</dbReference>
<dbReference type="PANTHER" id="PTHR11886:SF35">
    <property type="entry name" value="DYNEIN LIGHT CHAIN"/>
    <property type="match status" value="1"/>
</dbReference>
<dbReference type="Pfam" id="PF01221">
    <property type="entry name" value="Dynein_light"/>
    <property type="match status" value="1"/>
</dbReference>
<dbReference type="SMART" id="SM01375">
    <property type="entry name" value="Dynein_light"/>
    <property type="match status" value="1"/>
</dbReference>
<dbReference type="SUPFAM" id="SSF54648">
    <property type="entry name" value="DLC"/>
    <property type="match status" value="1"/>
</dbReference>
<dbReference type="PROSITE" id="PS01239">
    <property type="entry name" value="DYNEIN_LIGHT_1"/>
    <property type="match status" value="1"/>
</dbReference>
<keyword id="KW-0963">Cytoplasm</keyword>
<keyword id="KW-0206">Cytoskeleton</keyword>
<keyword id="KW-0243">Dynein</keyword>
<keyword id="KW-0493">Microtubule</keyword>
<keyword id="KW-0505">Motor protein</keyword>
<keyword id="KW-0509">mRNA transport</keyword>
<keyword id="KW-0906">Nuclear pore complex</keyword>
<keyword id="KW-0539">Nucleus</keyword>
<keyword id="KW-0653">Protein transport</keyword>
<keyword id="KW-1185">Reference proteome</keyword>
<keyword id="KW-0811">Translocation</keyword>
<keyword id="KW-0813">Transport</keyword>
<name>DYL1_CANGA</name>
<feature type="chain" id="PRO_0000195144" description="Dynein light chain 1, cytoplasmic">
    <location>
        <begin position="1"/>
        <end position="86"/>
    </location>
</feature>